<organism>
    <name type="scientific">Bacillus subtilis (strain 168)</name>
    <dbReference type="NCBI Taxonomy" id="224308"/>
    <lineage>
        <taxon>Bacteria</taxon>
        <taxon>Bacillati</taxon>
        <taxon>Bacillota</taxon>
        <taxon>Bacilli</taxon>
        <taxon>Bacillales</taxon>
        <taxon>Bacillaceae</taxon>
        <taxon>Bacillus</taxon>
    </lineage>
</organism>
<feature type="chain" id="PRO_0000170772" description="Uncharacterized symporter YnaJ">
    <location>
        <begin position="1"/>
        <end position="463"/>
    </location>
</feature>
<feature type="transmembrane region" description="Helical" evidence="1">
    <location>
        <begin position="21"/>
        <end position="40"/>
    </location>
</feature>
<feature type="transmembrane region" description="Helical" evidence="1">
    <location>
        <begin position="50"/>
        <end position="72"/>
    </location>
</feature>
<feature type="transmembrane region" description="Helical" evidence="1">
    <location>
        <begin position="84"/>
        <end position="104"/>
    </location>
</feature>
<feature type="transmembrane region" description="Helical" evidence="1">
    <location>
        <begin position="112"/>
        <end position="132"/>
    </location>
</feature>
<feature type="transmembrane region" description="Helical" evidence="1">
    <location>
        <begin position="156"/>
        <end position="176"/>
    </location>
</feature>
<feature type="transmembrane region" description="Helical" evidence="1">
    <location>
        <begin position="186"/>
        <end position="206"/>
    </location>
</feature>
<feature type="transmembrane region" description="Helical" evidence="1">
    <location>
        <begin position="237"/>
        <end position="257"/>
    </location>
</feature>
<feature type="transmembrane region" description="Helical" evidence="1">
    <location>
        <begin position="271"/>
        <end position="291"/>
    </location>
</feature>
<feature type="transmembrane region" description="Helical" evidence="1">
    <location>
        <begin position="311"/>
        <end position="331"/>
    </location>
</feature>
<feature type="transmembrane region" description="Helical" evidence="1">
    <location>
        <begin position="334"/>
        <end position="354"/>
    </location>
</feature>
<feature type="transmembrane region" description="Helical" evidence="1">
    <location>
        <begin position="367"/>
        <end position="387"/>
    </location>
</feature>
<feature type="transmembrane region" description="Helical" evidence="1">
    <location>
        <begin position="408"/>
        <end position="428"/>
    </location>
</feature>
<feature type="sequence conflict" description="In Ref. 1; AAB41090." evidence="2" ref="1">
    <original>L</original>
    <variation>F</variation>
    <location>
        <position position="2"/>
    </location>
</feature>
<feature type="sequence conflict" description="In Ref. 1; AAB41090." evidence="2" ref="1">
    <original>G</original>
    <variation>A</variation>
    <location>
        <position position="80"/>
    </location>
</feature>
<protein>
    <recommendedName>
        <fullName>Uncharacterized symporter YnaJ</fullName>
    </recommendedName>
</protein>
<accession>P94488</accession>
<sequence length="463" mass="51486">MLSENVKKISMVEKVGYASGDFACNLIYATVSTYLLFFYTDVFGLSAAAAGTMFLVVRIIDALADPFIGTIVDRTNSRFGRFRPYLLFGAFPFVILAILCFTTPDFSDMGKLIYAYITYVGLSLTYTTINVPYGALTSAMTRNNQEVVSITSVRMLFANLGGLVVAFFVPLLAAYLSDTSGNESLGWQLTMGILGMIGGCLLIFCFKSTKERVTLQKSEEKIKFTDIFEQFRVNRPLVVLSIFFIIIFGVNSISNSVGIYYVTYNLEREDLVKWYGLIGSLPALVILPFIPRLHQFLGKKKLLNYALLLNIIGLLALLFVPPSNVYLILVCRLIAAAGSLTAGGYMWALIPETIEYGEYRTGKRMGGLIYAIIGFFFKFGMALGGVVPGLVLDKFGYVANQAQTPAALMGILITTTIIPVFLLVLALIDINFYNLDEKKYKNMVRELENRDKVYLDHIDDFKA</sequence>
<name>YNAJ_BACSU</name>
<proteinExistence type="inferred from homology"/>
<gene>
    <name type="primary">ynaJ</name>
    <name type="ordered locus">BSU17570</name>
</gene>
<keyword id="KW-1003">Cell membrane</keyword>
<keyword id="KW-0472">Membrane</keyword>
<keyword id="KW-1185">Reference proteome</keyword>
<keyword id="KW-0769">Symport</keyword>
<keyword id="KW-0812">Transmembrane</keyword>
<keyword id="KW-1133">Transmembrane helix</keyword>
<keyword id="KW-0813">Transport</keyword>
<reference key="1">
    <citation type="submission" date="1997-02" db="EMBL/GenBank/DDBJ databases">
        <title>Sequencing of a 26 kb region of the Bacillus subtilis genome downstream of spoVJ.</title>
        <authorList>
            <person name="Borchert S."/>
            <person name="Klein C."/>
            <person name="Piksa B."/>
            <person name="Hammelmann M."/>
            <person name="Entian K.-D."/>
        </authorList>
    </citation>
    <scope>NUCLEOTIDE SEQUENCE [GENOMIC DNA]</scope>
</reference>
<reference key="2">
    <citation type="journal article" date="1997" name="Nature">
        <title>The complete genome sequence of the Gram-positive bacterium Bacillus subtilis.</title>
        <authorList>
            <person name="Kunst F."/>
            <person name="Ogasawara N."/>
            <person name="Moszer I."/>
            <person name="Albertini A.M."/>
            <person name="Alloni G."/>
            <person name="Azevedo V."/>
            <person name="Bertero M.G."/>
            <person name="Bessieres P."/>
            <person name="Bolotin A."/>
            <person name="Borchert S."/>
            <person name="Borriss R."/>
            <person name="Boursier L."/>
            <person name="Brans A."/>
            <person name="Braun M."/>
            <person name="Brignell S.C."/>
            <person name="Bron S."/>
            <person name="Brouillet S."/>
            <person name="Bruschi C.V."/>
            <person name="Caldwell B."/>
            <person name="Capuano V."/>
            <person name="Carter N.M."/>
            <person name="Choi S.-K."/>
            <person name="Codani J.-J."/>
            <person name="Connerton I.F."/>
            <person name="Cummings N.J."/>
            <person name="Daniel R.A."/>
            <person name="Denizot F."/>
            <person name="Devine K.M."/>
            <person name="Duesterhoeft A."/>
            <person name="Ehrlich S.D."/>
            <person name="Emmerson P.T."/>
            <person name="Entian K.-D."/>
            <person name="Errington J."/>
            <person name="Fabret C."/>
            <person name="Ferrari E."/>
            <person name="Foulger D."/>
            <person name="Fritz C."/>
            <person name="Fujita M."/>
            <person name="Fujita Y."/>
            <person name="Fuma S."/>
            <person name="Galizzi A."/>
            <person name="Galleron N."/>
            <person name="Ghim S.-Y."/>
            <person name="Glaser P."/>
            <person name="Goffeau A."/>
            <person name="Golightly E.J."/>
            <person name="Grandi G."/>
            <person name="Guiseppi G."/>
            <person name="Guy B.J."/>
            <person name="Haga K."/>
            <person name="Haiech J."/>
            <person name="Harwood C.R."/>
            <person name="Henaut A."/>
            <person name="Hilbert H."/>
            <person name="Holsappel S."/>
            <person name="Hosono S."/>
            <person name="Hullo M.-F."/>
            <person name="Itaya M."/>
            <person name="Jones L.-M."/>
            <person name="Joris B."/>
            <person name="Karamata D."/>
            <person name="Kasahara Y."/>
            <person name="Klaerr-Blanchard M."/>
            <person name="Klein C."/>
            <person name="Kobayashi Y."/>
            <person name="Koetter P."/>
            <person name="Koningstein G."/>
            <person name="Krogh S."/>
            <person name="Kumano M."/>
            <person name="Kurita K."/>
            <person name="Lapidus A."/>
            <person name="Lardinois S."/>
            <person name="Lauber J."/>
            <person name="Lazarevic V."/>
            <person name="Lee S.-M."/>
            <person name="Levine A."/>
            <person name="Liu H."/>
            <person name="Masuda S."/>
            <person name="Mauel C."/>
            <person name="Medigue C."/>
            <person name="Medina N."/>
            <person name="Mellado R.P."/>
            <person name="Mizuno M."/>
            <person name="Moestl D."/>
            <person name="Nakai S."/>
            <person name="Noback M."/>
            <person name="Noone D."/>
            <person name="O'Reilly M."/>
            <person name="Ogawa K."/>
            <person name="Ogiwara A."/>
            <person name="Oudega B."/>
            <person name="Park S.-H."/>
            <person name="Parro V."/>
            <person name="Pohl T.M."/>
            <person name="Portetelle D."/>
            <person name="Porwollik S."/>
            <person name="Prescott A.M."/>
            <person name="Presecan E."/>
            <person name="Pujic P."/>
            <person name="Purnelle B."/>
            <person name="Rapoport G."/>
            <person name="Rey M."/>
            <person name="Reynolds S."/>
            <person name="Rieger M."/>
            <person name="Rivolta C."/>
            <person name="Rocha E."/>
            <person name="Roche B."/>
            <person name="Rose M."/>
            <person name="Sadaie Y."/>
            <person name="Sato T."/>
            <person name="Scanlan E."/>
            <person name="Schleich S."/>
            <person name="Schroeter R."/>
            <person name="Scoffone F."/>
            <person name="Sekiguchi J."/>
            <person name="Sekowska A."/>
            <person name="Seror S.J."/>
            <person name="Serror P."/>
            <person name="Shin B.-S."/>
            <person name="Soldo B."/>
            <person name="Sorokin A."/>
            <person name="Tacconi E."/>
            <person name="Takagi T."/>
            <person name="Takahashi H."/>
            <person name="Takemaru K."/>
            <person name="Takeuchi M."/>
            <person name="Tamakoshi A."/>
            <person name="Tanaka T."/>
            <person name="Terpstra P."/>
            <person name="Tognoni A."/>
            <person name="Tosato V."/>
            <person name="Uchiyama S."/>
            <person name="Vandenbol M."/>
            <person name="Vannier F."/>
            <person name="Vassarotti A."/>
            <person name="Viari A."/>
            <person name="Wambutt R."/>
            <person name="Wedler E."/>
            <person name="Wedler H."/>
            <person name="Weitzenegger T."/>
            <person name="Winters P."/>
            <person name="Wipat A."/>
            <person name="Yamamoto H."/>
            <person name="Yamane K."/>
            <person name="Yasumoto K."/>
            <person name="Yata K."/>
            <person name="Yoshida K."/>
            <person name="Yoshikawa H.-F."/>
            <person name="Zumstein E."/>
            <person name="Yoshikawa H."/>
            <person name="Danchin A."/>
        </authorList>
    </citation>
    <scope>NUCLEOTIDE SEQUENCE [LARGE SCALE GENOMIC DNA]</scope>
    <source>
        <strain>168</strain>
    </source>
</reference>
<reference key="3">
    <citation type="journal article" date="2009" name="Microbiology">
        <title>From a consortium sequence to a unified sequence: the Bacillus subtilis 168 reference genome a decade later.</title>
        <authorList>
            <person name="Barbe V."/>
            <person name="Cruveiller S."/>
            <person name="Kunst F."/>
            <person name="Lenoble P."/>
            <person name="Meurice G."/>
            <person name="Sekowska A."/>
            <person name="Vallenet D."/>
            <person name="Wang T."/>
            <person name="Moszer I."/>
            <person name="Medigue C."/>
            <person name="Danchin A."/>
        </authorList>
    </citation>
    <scope>SEQUENCE REVISION TO 2 AND 80</scope>
</reference>
<comment type="subcellular location">
    <subcellularLocation>
        <location evidence="2">Cell membrane</location>
        <topology evidence="2">Multi-pass membrane protein</topology>
    </subcellularLocation>
</comment>
<comment type="similarity">
    <text evidence="2">Belongs to the sodium:galactoside symporter (TC 2.A.2) family.</text>
</comment>
<dbReference type="EMBL" id="U66480">
    <property type="protein sequence ID" value="AAB41090.1"/>
    <property type="molecule type" value="Genomic_DNA"/>
</dbReference>
<dbReference type="EMBL" id="AL009126">
    <property type="protein sequence ID" value="CAB13641.2"/>
    <property type="molecule type" value="Genomic_DNA"/>
</dbReference>
<dbReference type="PIR" id="A69888">
    <property type="entry name" value="A69888"/>
</dbReference>
<dbReference type="RefSeq" id="WP_003245259.1">
    <property type="nucleotide sequence ID" value="NZ_OZ025638.1"/>
</dbReference>
<dbReference type="SMR" id="P94488"/>
<dbReference type="FunCoup" id="P94488">
    <property type="interactions" value="134"/>
</dbReference>
<dbReference type="STRING" id="224308.BSU17570"/>
<dbReference type="TCDB" id="2.A.2.3.2">
    <property type="family name" value="the glycoside-pentoside-hexuronide (gph):cation symporter family"/>
</dbReference>
<dbReference type="PaxDb" id="224308-BSU17570"/>
<dbReference type="EnsemblBacteria" id="CAB13641">
    <property type="protein sequence ID" value="CAB13641"/>
    <property type="gene ID" value="BSU_17570"/>
</dbReference>
<dbReference type="GeneID" id="939533"/>
<dbReference type="KEGG" id="bsu:BSU17570"/>
<dbReference type="PATRIC" id="fig|224308.179.peg.1907"/>
<dbReference type="eggNOG" id="COG2211">
    <property type="taxonomic scope" value="Bacteria"/>
</dbReference>
<dbReference type="InParanoid" id="P94488"/>
<dbReference type="OrthoDB" id="9764596at2"/>
<dbReference type="PhylomeDB" id="P94488"/>
<dbReference type="BioCyc" id="BSUB:BSU17570-MONOMER"/>
<dbReference type="Proteomes" id="UP000001570">
    <property type="component" value="Chromosome"/>
</dbReference>
<dbReference type="GO" id="GO:0005886">
    <property type="term" value="C:plasma membrane"/>
    <property type="evidence" value="ECO:0000318"/>
    <property type="project" value="GO_Central"/>
</dbReference>
<dbReference type="GO" id="GO:0015293">
    <property type="term" value="F:symporter activity"/>
    <property type="evidence" value="ECO:0007669"/>
    <property type="project" value="UniProtKB-KW"/>
</dbReference>
<dbReference type="GO" id="GO:0008643">
    <property type="term" value="P:carbohydrate transport"/>
    <property type="evidence" value="ECO:0007669"/>
    <property type="project" value="InterPro"/>
</dbReference>
<dbReference type="GO" id="GO:0006814">
    <property type="term" value="P:sodium ion transport"/>
    <property type="evidence" value="ECO:0007669"/>
    <property type="project" value="InterPro"/>
</dbReference>
<dbReference type="GO" id="GO:0055085">
    <property type="term" value="P:transmembrane transport"/>
    <property type="evidence" value="ECO:0000318"/>
    <property type="project" value="GO_Central"/>
</dbReference>
<dbReference type="CDD" id="cd17332">
    <property type="entry name" value="MFS_MelB_like"/>
    <property type="match status" value="1"/>
</dbReference>
<dbReference type="Gene3D" id="1.20.1250.20">
    <property type="entry name" value="MFS general substrate transporter like domains"/>
    <property type="match status" value="2"/>
</dbReference>
<dbReference type="InterPro" id="IPR039672">
    <property type="entry name" value="MFS_2"/>
</dbReference>
<dbReference type="InterPro" id="IPR020846">
    <property type="entry name" value="MFS_dom"/>
</dbReference>
<dbReference type="InterPro" id="IPR036259">
    <property type="entry name" value="MFS_trans_sf"/>
</dbReference>
<dbReference type="InterPro" id="IPR001927">
    <property type="entry name" value="Na/Gal_symport"/>
</dbReference>
<dbReference type="InterPro" id="IPR018043">
    <property type="entry name" value="Na/Gal_symport_CS"/>
</dbReference>
<dbReference type="NCBIfam" id="TIGR00792">
    <property type="entry name" value="gph"/>
    <property type="match status" value="1"/>
</dbReference>
<dbReference type="PANTHER" id="PTHR11328:SF24">
    <property type="entry name" value="MAJOR FACILITATOR SUPERFAMILY (MFS) PROFILE DOMAIN-CONTAINING PROTEIN"/>
    <property type="match status" value="1"/>
</dbReference>
<dbReference type="PANTHER" id="PTHR11328">
    <property type="entry name" value="MAJOR FACILITATOR SUPERFAMILY DOMAIN-CONTAINING PROTEIN"/>
    <property type="match status" value="1"/>
</dbReference>
<dbReference type="Pfam" id="PF13347">
    <property type="entry name" value="MFS_2"/>
    <property type="match status" value="1"/>
</dbReference>
<dbReference type="SUPFAM" id="SSF103473">
    <property type="entry name" value="MFS general substrate transporter"/>
    <property type="match status" value="1"/>
</dbReference>
<dbReference type="PROSITE" id="PS50850">
    <property type="entry name" value="MFS"/>
    <property type="match status" value="1"/>
</dbReference>
<dbReference type="PROSITE" id="PS00872">
    <property type="entry name" value="NA_GALACTOSIDE_SYMP"/>
    <property type="match status" value="1"/>
</dbReference>
<evidence type="ECO:0000255" key="1"/>
<evidence type="ECO:0000305" key="2"/>